<keyword id="KW-0002">3D-structure</keyword>
<keyword id="KW-0903">Direct protein sequencing</keyword>
<keyword id="KW-0238">DNA-binding</keyword>
<keyword id="KW-0496">Mitochondrion</keyword>
<keyword id="KW-0539">Nucleus</keyword>
<keyword id="KW-0597">Phosphoprotein</keyword>
<keyword id="KW-1185">Reference proteome</keyword>
<keyword id="KW-0804">Transcription</keyword>
<keyword id="KW-0805">Transcription regulation</keyword>
<evidence type="ECO:0000256" key="1">
    <source>
        <dbReference type="SAM" id="MobiDB-lite"/>
    </source>
</evidence>
<evidence type="ECO:0000269" key="2">
    <source>
    </source>
</evidence>
<evidence type="ECO:0000269" key="3">
    <source>
    </source>
</evidence>
<evidence type="ECO:0000269" key="4">
    <source>
    </source>
</evidence>
<evidence type="ECO:0000269" key="5">
    <source>
    </source>
</evidence>
<evidence type="ECO:0000269" key="6">
    <source>
    </source>
</evidence>
<evidence type="ECO:0000269" key="7">
    <source>
    </source>
</evidence>
<evidence type="ECO:0000269" key="8">
    <source>
    </source>
</evidence>
<evidence type="ECO:0000269" key="9">
    <source>
    </source>
</evidence>
<evidence type="ECO:0007744" key="10">
    <source>
    </source>
</evidence>
<evidence type="ECO:0007829" key="11">
    <source>
        <dbReference type="PDB" id="5AIM"/>
    </source>
</evidence>
<evidence type="ECO:0007829" key="12">
    <source>
        <dbReference type="PDB" id="9GC3"/>
    </source>
</evidence>
<name>TFC3_YEAST</name>
<gene>
    <name type="primary">TFC3</name>
    <name type="synonym">TSV115</name>
    <name type="ordered locus">YAL001C</name>
    <name type="ORF">FUN24</name>
</gene>
<comment type="function">
    <text evidence="3 6 9">TFIIIC mediates tRNA and 5S RNA gene activation by binding to intragenic promoter elements. Upstream of the transcription start site, TFIIIC assembles the initiation complex TFIIIB-TFIIIC-tDNA, which is sufficient for RNA polymerase III recruitment and function. Part of the tauB domain of TFIIIC that binds boxB DNA promoter sites of tRNA and similar genes. TFC3 is essential for cell viability. Cooperates with TFC6 in DNA binding.</text>
</comment>
<comment type="subunit">
    <text evidence="2 3 5 7">Component of the TFIIIC complex composed of TFC1, TFC3, TFC4, TFC6, TFC7 and TFC8. The subunits are organized in two globular domains, tauA and tauB, connected by a proteolysis-sensitive and flexible linker. Interacts with TFC1, TFC4 and TFC6.</text>
</comment>
<comment type="subcellular location">
    <subcellularLocation>
        <location>Nucleus</location>
    </subcellularLocation>
    <subcellularLocation>
        <location>Mitochondrion</location>
    </subcellularLocation>
</comment>
<comment type="miscellaneous">
    <text evidence="4">Present with 125 molecules/cell in log phase SD medium.</text>
</comment>
<accession>P34111</accession>
<accession>D6VPL5</accession>
<sequence length="1160" mass="132108">MVLTIYPDELVQIVSDKIASNKGKITLNQLWDISGKYFDLSDKKVKQFVLSCVILKKDIEVYCDGAITTKNVTDIIGDANHSYSVGITEDSLWTLLTGYTKKESTIGNSAFELLLEVAKSGEKGINTMDLAQVTGQDPRSVTGRIKKINHLLTSSQLIYKGHVVKQLKLKKFSHDGVDSNPYINIRDHLATIVEVVKRSKNGIRQIIDLKRELKFDKEKRLSKAFIAAIAWLDEKEYLKKVLVVSPKNPAIKIRCVKYVKDIPDSKGSPSFEYDSNSADEDSVSDSKAAFEDEDLVEGLDNFNATDLLQNQGLVMEEKEDAVKNEVLLNRFYPLQNQTYDIADKSGLKGISTMDVVNRITGKEFQRAFTKSSEYYLESVDKQKENTGGYRLFRIYDFEGKKKFFRLFTAQNFQKLTNAEDEISVPKGFDELGKSRTDLKTLNEDNFVALNNTVRFTTDSDGQDIFFWHGELKIPPNSKKTPNKNKRKRQVKNSTNASVAGNISNPKRIKLEQHVSTAQEPKSAEDSPSSNGGTVVKGKVVNFGGFSARSLRSLQRQRAILKVMNTIGGVAYLREQFYESVSKYMGSTTTLDKKTVRGDVDLMVESEKLGARTEPVSGRKIIFLPTVGEDAIQRYILKEKDSKKATFTDVIHDTEIYFFDQTEKNRFHRGKKSVERIRKFQNRQKNAKIKASDDAISKKSTSVNVSDGKIKRRDKKVSAGRTTVVVENTKEDKTVYHAGTKDGVQALIRAVVVTKSIKNEIMWDKITKLFPNNSLDNLKKKWTARRVRMGHSGWRAYVDKWKKMLVLAIKSEKISLRDVEELDLIKLLDIWTSFDEKEIKRPLFLYKNYEENRKKFTLVRDDTLTHSGNDLAMSSMIQREISSLKKTYTRKISASTKDLSKSQSDDYIRTVIRSILIESPSTTRNEIEALKNVGNESIDNVIMDMAKEKQIYLHGSKLECTDTLPDILENRGNYKDFGVAFQYRCKVNELLEAGNAIVINQEPSDISSWVLIDLISGELLNMDVIPMVRNVRPLTYTSRRFEIRTLTPPLIIYANSQTKLNTARKSAVKVPLGKPFSRLWVNGSGSIRPNIWKQVVTMVVNEIIFHPGITLSRLQSRCREVLSLHEISEICKWLLERQVLITTDFDGYWVNHNWYSIYEST</sequence>
<feature type="chain" id="PRO_0000072497" description="Transcription factor tau 138 kDa subunit">
    <location>
        <begin position="1"/>
        <end position="1160"/>
    </location>
</feature>
<feature type="region of interest" description="Disordered" evidence="1">
    <location>
        <begin position="475"/>
        <end position="533"/>
    </location>
</feature>
<feature type="compositionally biased region" description="Basic residues" evidence="1">
    <location>
        <begin position="480"/>
        <end position="490"/>
    </location>
</feature>
<feature type="compositionally biased region" description="Polar residues" evidence="1">
    <location>
        <begin position="491"/>
        <end position="504"/>
    </location>
</feature>
<feature type="compositionally biased region" description="Polar residues" evidence="1">
    <location>
        <begin position="513"/>
        <end position="529"/>
    </location>
</feature>
<feature type="modified residue" description="Phosphoserine" evidence="10">
    <location>
        <position position="546"/>
    </location>
</feature>
<feature type="mutagenesis site" description="In TSV115; thermosensitive. Level of TFIIIC and its affinity for tDNA reduced. tDNA binding activity very sensitive to mild heat treatments, and TFIIIC-DNA interaction inhibited at moderate salt concentrations." evidence="8">
    <original>G</original>
    <variation>E</variation>
    <location>
        <position position="349"/>
    </location>
</feature>
<feature type="helix" evidence="12">
    <location>
        <begin position="7"/>
        <end position="18"/>
    </location>
</feature>
<feature type="turn" evidence="12">
    <location>
        <begin position="19"/>
        <end position="23"/>
    </location>
</feature>
<feature type="strand" evidence="12">
    <location>
        <begin position="24"/>
        <end position="26"/>
    </location>
</feature>
<feature type="helix" evidence="12">
    <location>
        <begin position="27"/>
        <end position="34"/>
    </location>
</feature>
<feature type="turn" evidence="12">
    <location>
        <begin position="35"/>
        <end position="37"/>
    </location>
</feature>
<feature type="helix" evidence="12">
    <location>
        <begin position="43"/>
        <end position="54"/>
    </location>
</feature>
<feature type="strand" evidence="12">
    <location>
        <begin position="59"/>
        <end position="63"/>
    </location>
</feature>
<feature type="helix" evidence="12">
    <location>
        <begin position="72"/>
        <end position="77"/>
    </location>
</feature>
<feature type="strand" evidence="12">
    <location>
        <begin position="83"/>
        <end position="87"/>
    </location>
</feature>
<feature type="helix" evidence="12">
    <location>
        <begin position="89"/>
        <end position="97"/>
    </location>
</feature>
<feature type="turn" evidence="12">
    <location>
        <begin position="101"/>
        <end position="103"/>
    </location>
</feature>
<feature type="helix" evidence="12">
    <location>
        <begin position="108"/>
        <end position="120"/>
    </location>
</feature>
<feature type="helix" evidence="12">
    <location>
        <begin position="121"/>
        <end position="123"/>
    </location>
</feature>
<feature type="helix" evidence="12">
    <location>
        <begin position="127"/>
        <end position="134"/>
    </location>
</feature>
<feature type="helix" evidence="12">
    <location>
        <begin position="138"/>
        <end position="146"/>
    </location>
</feature>
<feature type="helix" evidence="12">
    <location>
        <begin position="149"/>
        <end position="151"/>
    </location>
</feature>
<feature type="strand" evidence="12">
    <location>
        <begin position="152"/>
        <end position="159"/>
    </location>
</feature>
<feature type="strand" evidence="12">
    <location>
        <begin position="162"/>
        <end position="169"/>
    </location>
</feature>
<feature type="helix" evidence="12">
    <location>
        <begin position="170"/>
        <end position="172"/>
    </location>
</feature>
<feature type="helix" evidence="12">
    <location>
        <begin position="185"/>
        <end position="187"/>
    </location>
</feature>
<feature type="helix" evidence="12">
    <location>
        <begin position="189"/>
        <end position="198"/>
    </location>
</feature>
<feature type="strand" evidence="12">
    <location>
        <begin position="202"/>
        <end position="205"/>
    </location>
</feature>
<feature type="helix" evidence="12">
    <location>
        <begin position="206"/>
        <end position="212"/>
    </location>
</feature>
<feature type="helix" evidence="12">
    <location>
        <begin position="215"/>
        <end position="217"/>
    </location>
</feature>
<feature type="helix" evidence="12">
    <location>
        <begin position="219"/>
        <end position="234"/>
    </location>
</feature>
<feature type="strand" evidence="12">
    <location>
        <begin position="237"/>
        <end position="244"/>
    </location>
</feature>
<feature type="strand" evidence="12">
    <location>
        <begin position="252"/>
        <end position="258"/>
    </location>
</feature>
<feature type="strand" evidence="12">
    <location>
        <begin position="330"/>
        <end position="332"/>
    </location>
</feature>
<feature type="helix" evidence="12">
    <location>
        <begin position="334"/>
        <end position="344"/>
    </location>
</feature>
<feature type="helix" evidence="12">
    <location>
        <begin position="346"/>
        <end position="348"/>
    </location>
</feature>
<feature type="helix" evidence="12">
    <location>
        <begin position="352"/>
        <end position="359"/>
    </location>
</feature>
<feature type="helix" evidence="12">
    <location>
        <begin position="362"/>
        <end position="364"/>
    </location>
</feature>
<feature type="helix" evidence="12">
    <location>
        <begin position="365"/>
        <end position="372"/>
    </location>
</feature>
<feature type="turn" evidence="12">
    <location>
        <begin position="373"/>
        <end position="375"/>
    </location>
</feature>
<feature type="strand" evidence="12">
    <location>
        <begin position="376"/>
        <end position="381"/>
    </location>
</feature>
<feature type="strand" evidence="12">
    <location>
        <begin position="391"/>
        <end position="398"/>
    </location>
</feature>
<feature type="strand" evidence="12">
    <location>
        <begin position="401"/>
        <end position="408"/>
    </location>
</feature>
<feature type="helix" evidence="12">
    <location>
        <begin position="409"/>
        <end position="416"/>
    </location>
</feature>
<feature type="helix" evidence="12">
    <location>
        <begin position="438"/>
        <end position="444"/>
    </location>
</feature>
<feature type="strand" evidence="12">
    <location>
        <begin position="453"/>
        <end position="457"/>
    </location>
</feature>
<feature type="strand" evidence="12">
    <location>
        <begin position="463"/>
        <end position="467"/>
    </location>
</feature>
<feature type="strand" evidence="12">
    <location>
        <begin position="470"/>
        <end position="472"/>
    </location>
</feature>
<feature type="helix" evidence="12">
    <location>
        <begin position="542"/>
        <end position="544"/>
    </location>
</feature>
<feature type="helix" evidence="11">
    <location>
        <begin position="546"/>
        <end position="565"/>
    </location>
</feature>
<feature type="strand" evidence="11">
    <location>
        <begin position="568"/>
        <end position="573"/>
    </location>
</feature>
<feature type="helix" evidence="11">
    <location>
        <begin position="574"/>
        <end position="584"/>
    </location>
</feature>
<feature type="helix" evidence="11">
    <location>
        <begin position="593"/>
        <end position="604"/>
    </location>
</feature>
<feature type="strand" evidence="11">
    <location>
        <begin position="607"/>
        <end position="612"/>
    </location>
</feature>
<feature type="turn" evidence="11">
    <location>
        <begin position="614"/>
        <end position="616"/>
    </location>
</feature>
<feature type="strand" evidence="11">
    <location>
        <begin position="619"/>
        <end position="622"/>
    </location>
</feature>
<feature type="helix" evidence="11">
    <location>
        <begin position="628"/>
        <end position="637"/>
    </location>
</feature>
<feature type="strand" evidence="12">
    <location>
        <begin position="648"/>
        <end position="650"/>
    </location>
</feature>
<feature type="helix" evidence="12">
    <location>
        <begin position="660"/>
        <end position="667"/>
    </location>
</feature>
<reference key="1">
    <citation type="journal article" date="1992" name="Proc. Natl. Acad. Sci. U.S.A.">
        <title>TFC3: gene encoding the B-block binding subunit of the yeast transcription factor IIIC.</title>
        <authorList>
            <person name="Lefebvre O."/>
            <person name="Carles C."/>
            <person name="Conesa C."/>
            <person name="Swanson R.N."/>
            <person name="Bouet F."/>
            <person name="Riva M."/>
            <person name="Sentenac A."/>
        </authorList>
    </citation>
    <scope>NUCLEOTIDE SEQUENCE [GENOMIC DNA]</scope>
    <scope>PROTEIN SEQUENCE OF 124-143; 331-347; 440-453; 508-520 AND 539-547</scope>
    <scope>FUNCTION</scope>
    <scope>IDENTIFICATION IN TFIIIC</scope>
    <source>
        <strain>ATCC 204508 / S288c</strain>
    </source>
</reference>
<reference key="2">
    <citation type="journal article" date="1994" name="J. Biol. Chem.">
        <title>A mutation in the largest subunit of yeast TFIIIC affects tRNA and 5 S RNA synthesis. Identification of two classes of suppressors.</title>
        <authorList>
            <person name="Lefebvre O."/>
            <person name="Rueth J."/>
            <person name="Sentenac A."/>
        </authorList>
    </citation>
    <scope>NUCLEOTIDE SEQUENCE [GENOMIC DNA]</scope>
    <scope>MUTAGENESIS OF GLY-349</scope>
</reference>
<reference key="3">
    <citation type="journal article" date="1994" name="Yeast">
        <title>Sequencing of chromosome I of Saccharomyces cerevisiae: analysis of the 42 kbp SPO7-CENI-CDC15 region.</title>
        <authorList>
            <person name="Clark M.W."/>
            <person name="Keng T."/>
            <person name="Storms R.K."/>
            <person name="Zhong W.-W."/>
            <person name="Fortin N."/>
            <person name="Zeng B."/>
            <person name="Delaney S."/>
            <person name="Ouellette B.F.F."/>
            <person name="Barton A.B."/>
            <person name="Kaback D.B."/>
            <person name="Bussey H."/>
        </authorList>
    </citation>
    <scope>NUCLEOTIDE SEQUENCE [GENOMIC DNA]</scope>
    <source>
        <strain>ATCC 204511 / S288c / AB972</strain>
    </source>
</reference>
<reference key="4">
    <citation type="journal article" date="1995" name="Proc. Natl. Acad. Sci. U.S.A.">
        <title>The nucleotide sequence of chromosome I from Saccharomyces cerevisiae.</title>
        <authorList>
            <person name="Bussey H."/>
            <person name="Kaback D.B."/>
            <person name="Zhong W.-W."/>
            <person name="Vo D.H."/>
            <person name="Clark M.W."/>
            <person name="Fortin N."/>
            <person name="Hall J."/>
            <person name="Ouellette B.F.F."/>
            <person name="Keng T."/>
            <person name="Barton A.B."/>
            <person name="Su Y."/>
            <person name="Davies C.J."/>
            <person name="Storms R.K."/>
        </authorList>
    </citation>
    <scope>NUCLEOTIDE SEQUENCE [LARGE SCALE GENOMIC DNA]</scope>
    <source>
        <strain>ATCC 204508 / S288c</strain>
    </source>
</reference>
<reference key="5">
    <citation type="journal article" date="2014" name="G3 (Bethesda)">
        <title>The reference genome sequence of Saccharomyces cerevisiae: Then and now.</title>
        <authorList>
            <person name="Engel S.R."/>
            <person name="Dietrich F.S."/>
            <person name="Fisk D.G."/>
            <person name="Binkley G."/>
            <person name="Balakrishnan R."/>
            <person name="Costanzo M.C."/>
            <person name="Dwight S.S."/>
            <person name="Hitz B.C."/>
            <person name="Karra K."/>
            <person name="Nash R.S."/>
            <person name="Weng S."/>
            <person name="Wong E.D."/>
            <person name="Lloyd P."/>
            <person name="Skrzypek M.S."/>
            <person name="Miyasato S.R."/>
            <person name="Simison M."/>
            <person name="Cherry J.M."/>
        </authorList>
    </citation>
    <scope>GENOME REANNOTATION</scope>
    <source>
        <strain>ATCC 204508 / S288c</strain>
    </source>
</reference>
<reference key="6">
    <citation type="journal article" date="1989" name="J. Biol. Chem.">
        <title>Two polypeptide chains in yeast transcription factor tau interact with DNA.</title>
        <authorList>
            <person name="Gabrielsen O.S."/>
            <person name="Marzouki N."/>
            <person name="Ruet A."/>
            <person name="Sentenac A."/>
            <person name="Fromageot P."/>
        </authorList>
    </citation>
    <scope>FUNCTION</scope>
</reference>
<reference key="7">
    <citation type="journal article" date="1990" name="J. Biol. Chem.">
        <title>Purification and characterization of Saccharomyces cerevisiae transcription factor TFIIIC. Polypeptide composition defined with polyclonal antibodies.</title>
        <authorList>
            <person name="Parsons M.C."/>
            <person name="Weil P.A."/>
        </authorList>
    </citation>
    <scope>IDENTIFICATION IN TFIIIC</scope>
</reference>
<reference key="8">
    <citation type="journal article" date="1993" name="J. Biol. Chem.">
        <title>On the subunit composition, stoichiometry, and phosphorylation of the yeast transcription factor TFIIIC/tau.</title>
        <authorList>
            <person name="Conesa C."/>
            <person name="Swanson R.N."/>
            <person name="Schultz P."/>
            <person name="Oudet P."/>
            <person name="Sentenac A."/>
        </authorList>
    </citation>
    <scope>INTERACTION WITH TFC1; TFC4 AND TFC6</scope>
    <scope>PHOSPHORYLATION</scope>
</reference>
<reference key="9">
    <citation type="journal article" date="1998" name="Mol. Cell. Biol.">
        <title>Tau91, an essential subunit of yeast transcription factor IIIC, cooperates with tau138 in DNA binding.</title>
        <authorList>
            <person name="Arrebola R."/>
            <person name="Manaud N."/>
            <person name="Rozenfeld S."/>
            <person name="Marsolier M.C."/>
            <person name="Lefebvre O."/>
            <person name="Carles C."/>
            <person name="Thuriaux P."/>
            <person name="Conesa C."/>
            <person name="Sentenac A."/>
        </authorList>
    </citation>
    <scope>FUNCTION</scope>
</reference>
<reference key="10">
    <citation type="journal article" date="2003" name="J. Biol. Chem.">
        <title>The tau95 subunit of yeast TFIIIC influences upstream and downstream functions of TFIIIC.DNA complexes.</title>
        <authorList>
            <person name="Jourdain S."/>
            <person name="Acker J."/>
            <person name="Ducrot C."/>
            <person name="Sentenac A."/>
            <person name="Lefebvre O."/>
        </authorList>
    </citation>
    <scope>INTERACTION WITH TFC1 AND TFC6</scope>
</reference>
<reference key="11">
    <citation type="journal article" date="2003" name="Nature">
        <title>Global analysis of protein localization in budding yeast.</title>
        <authorList>
            <person name="Huh W.-K."/>
            <person name="Falvo J.V."/>
            <person name="Gerke L.C."/>
            <person name="Carroll A.S."/>
            <person name="Howson R.W."/>
            <person name="Weissman J.S."/>
            <person name="O'Shea E.K."/>
        </authorList>
    </citation>
    <scope>SUBCELLULAR LOCATION [LARGE SCALE ANALYSIS]</scope>
</reference>
<reference key="12">
    <citation type="journal article" date="2003" name="Nature">
        <title>Global analysis of protein expression in yeast.</title>
        <authorList>
            <person name="Ghaemmaghami S."/>
            <person name="Huh W.-K."/>
            <person name="Bower K."/>
            <person name="Howson R.W."/>
            <person name="Belle A."/>
            <person name="Dephoure N."/>
            <person name="O'Shea E.K."/>
            <person name="Weissman J.S."/>
        </authorList>
    </citation>
    <scope>LEVEL OF PROTEIN EXPRESSION [LARGE SCALE ANALYSIS]</scope>
</reference>
<reference key="13">
    <citation type="journal article" date="2003" name="Proc. Natl. Acad. Sci. U.S.A.">
        <title>The proteome of Saccharomyces cerevisiae mitochondria.</title>
        <authorList>
            <person name="Sickmann A."/>
            <person name="Reinders J."/>
            <person name="Wagner Y."/>
            <person name="Joppich C."/>
            <person name="Zahedi R.P."/>
            <person name="Meyer H.E."/>
            <person name="Schoenfisch B."/>
            <person name="Perschil I."/>
            <person name="Chacinska A."/>
            <person name="Guiard B."/>
            <person name="Rehling P."/>
            <person name="Pfanner N."/>
            <person name="Meisinger C."/>
        </authorList>
    </citation>
    <scope>SUBCELLULAR LOCATION [LARGE SCALE ANALYSIS]</scope>
    <source>
        <strain>ATCC 76625 / YPH499</strain>
    </source>
</reference>
<reference key="14">
    <citation type="journal article" date="2008" name="Mol. Cell. Proteomics">
        <title>A multidimensional chromatography technology for in-depth phosphoproteome analysis.</title>
        <authorList>
            <person name="Albuquerque C.P."/>
            <person name="Smolka M.B."/>
            <person name="Payne S.H."/>
            <person name="Bafna V."/>
            <person name="Eng J."/>
            <person name="Zhou H."/>
        </authorList>
    </citation>
    <scope>PHOSPHORYLATION [LARGE SCALE ANALYSIS] AT SER-546</scope>
    <scope>IDENTIFICATION BY MASS SPECTROMETRY [LARGE SCALE ANALYSIS]</scope>
</reference>
<protein>
    <recommendedName>
        <fullName>Transcription factor tau 138 kDa subunit</fullName>
    </recommendedName>
    <alternativeName>
        <fullName>TFIIIC 138 kDa subunit</fullName>
    </alternativeName>
    <alternativeName>
        <fullName>Transcription factor C subunit 3</fullName>
    </alternativeName>
</protein>
<organism>
    <name type="scientific">Saccharomyces cerevisiae (strain ATCC 204508 / S288c)</name>
    <name type="common">Baker's yeast</name>
    <dbReference type="NCBI Taxonomy" id="559292"/>
    <lineage>
        <taxon>Eukaryota</taxon>
        <taxon>Fungi</taxon>
        <taxon>Dikarya</taxon>
        <taxon>Ascomycota</taxon>
        <taxon>Saccharomycotina</taxon>
        <taxon>Saccharomycetes</taxon>
        <taxon>Saccharomycetales</taxon>
        <taxon>Saccharomycetaceae</taxon>
        <taxon>Saccharomyces</taxon>
    </lineage>
</organism>
<dbReference type="EMBL" id="M98261">
    <property type="protein sequence ID" value="AAA34378.1"/>
    <property type="molecule type" value="Genomic_DNA"/>
</dbReference>
<dbReference type="EMBL" id="L22015">
    <property type="protein sequence ID" value="AAC04956.1"/>
    <property type="molecule type" value="Genomic_DNA"/>
</dbReference>
<dbReference type="EMBL" id="BK006935">
    <property type="protein sequence ID" value="DAA06985.1"/>
    <property type="molecule type" value="Genomic_DNA"/>
</dbReference>
<dbReference type="PIR" id="A46423">
    <property type="entry name" value="A46423"/>
</dbReference>
<dbReference type="RefSeq" id="NP_009400.1">
    <property type="nucleotide sequence ID" value="NM_001178148.1"/>
</dbReference>
<dbReference type="PDB" id="5AIM">
    <property type="method" value="X-ray"/>
    <property type="resolution" value="1.40 A"/>
    <property type="chains" value="A/B=546-641"/>
</dbReference>
<dbReference type="PDB" id="8FFZ">
    <property type="method" value="EM"/>
    <property type="resolution" value="3.80 A"/>
    <property type="chains" value="B=1-1160"/>
</dbReference>
<dbReference type="PDB" id="9GC3">
    <property type="method" value="EM"/>
    <property type="resolution" value="2.46 A"/>
    <property type="chains" value="A=1-1160"/>
</dbReference>
<dbReference type="PDB" id="9GCK">
    <property type="method" value="EM"/>
    <property type="resolution" value="3.70 A"/>
    <property type="chains" value="A=1-1160"/>
</dbReference>
<dbReference type="PDBsum" id="5AIM"/>
<dbReference type="PDBsum" id="8FFZ"/>
<dbReference type="PDBsum" id="9GC3"/>
<dbReference type="PDBsum" id="9GCK"/>
<dbReference type="EMDB" id="EMD-29071"/>
<dbReference type="EMDB" id="EMD-51228"/>
<dbReference type="EMDB" id="EMD-51231"/>
<dbReference type="SMR" id="P34111"/>
<dbReference type="BioGRID" id="31789">
    <property type="interactions" value="179"/>
</dbReference>
<dbReference type="ComplexPortal" id="CPX-1656">
    <property type="entry name" value="General transcription factor TFIIIC complex"/>
</dbReference>
<dbReference type="DIP" id="DIP-6739N"/>
<dbReference type="FunCoup" id="P34111">
    <property type="interactions" value="51"/>
</dbReference>
<dbReference type="IntAct" id="P34111">
    <property type="interactions" value="6"/>
</dbReference>
<dbReference type="MINT" id="P34111"/>
<dbReference type="STRING" id="4932.YAL001C"/>
<dbReference type="iPTMnet" id="P34111"/>
<dbReference type="PaxDb" id="4932-YAL001C"/>
<dbReference type="PeptideAtlas" id="P34111"/>
<dbReference type="EnsemblFungi" id="YAL001C_mRNA">
    <property type="protein sequence ID" value="YAL001C"/>
    <property type="gene ID" value="YAL001C"/>
</dbReference>
<dbReference type="GeneID" id="851262"/>
<dbReference type="KEGG" id="sce:YAL001C"/>
<dbReference type="AGR" id="SGD:S000000001"/>
<dbReference type="SGD" id="S000000001">
    <property type="gene designation" value="TFC3"/>
</dbReference>
<dbReference type="VEuPathDB" id="FungiDB:YAL001C"/>
<dbReference type="eggNOG" id="ENOG502QVPM">
    <property type="taxonomic scope" value="Eukaryota"/>
</dbReference>
<dbReference type="HOGENOM" id="CLU_005481_0_0_1"/>
<dbReference type="InParanoid" id="P34111"/>
<dbReference type="OMA" id="MSSMIQR"/>
<dbReference type="OrthoDB" id="68020at2759"/>
<dbReference type="BioCyc" id="YEAST:G3O-28816-MONOMER"/>
<dbReference type="Reactome" id="R-SCE-76066">
    <property type="pathway name" value="RNA Polymerase III Transcription Initiation From Type 2 Promoter"/>
</dbReference>
<dbReference type="BioGRID-ORCS" id="851262">
    <property type="hits" value="7 hits in 10 CRISPR screens"/>
</dbReference>
<dbReference type="EvolutionaryTrace" id="P34111"/>
<dbReference type="PRO" id="PR:P34111"/>
<dbReference type="Proteomes" id="UP000002311">
    <property type="component" value="Chromosome I"/>
</dbReference>
<dbReference type="RNAct" id="P34111">
    <property type="molecule type" value="protein"/>
</dbReference>
<dbReference type="GO" id="GO:0005739">
    <property type="term" value="C:mitochondrion"/>
    <property type="evidence" value="ECO:0007005"/>
    <property type="project" value="SGD"/>
</dbReference>
<dbReference type="GO" id="GO:0005654">
    <property type="term" value="C:nucleoplasm"/>
    <property type="evidence" value="ECO:0000304"/>
    <property type="project" value="Reactome"/>
</dbReference>
<dbReference type="GO" id="GO:0005634">
    <property type="term" value="C:nucleus"/>
    <property type="evidence" value="ECO:0000303"/>
    <property type="project" value="ComplexPortal"/>
</dbReference>
<dbReference type="GO" id="GO:0000127">
    <property type="term" value="C:transcription factor TFIIIC complex"/>
    <property type="evidence" value="ECO:0000314"/>
    <property type="project" value="SGD"/>
</dbReference>
<dbReference type="GO" id="GO:0003677">
    <property type="term" value="F:DNA binding"/>
    <property type="evidence" value="ECO:0007669"/>
    <property type="project" value="UniProtKB-KW"/>
</dbReference>
<dbReference type="GO" id="GO:0042791">
    <property type="term" value="P:5S class rRNA transcription by RNA polymerase III"/>
    <property type="evidence" value="ECO:0000314"/>
    <property type="project" value="SGD"/>
</dbReference>
<dbReference type="GO" id="GO:0071168">
    <property type="term" value="P:protein localization to chromatin"/>
    <property type="evidence" value="ECO:0000315"/>
    <property type="project" value="SGD"/>
</dbReference>
<dbReference type="GO" id="GO:0006383">
    <property type="term" value="P:transcription by RNA polymerase III"/>
    <property type="evidence" value="ECO:0000314"/>
    <property type="project" value="SGD"/>
</dbReference>
<dbReference type="GO" id="GO:0006384">
    <property type="term" value="P:transcription initiation at RNA polymerase III promoter"/>
    <property type="evidence" value="ECO:0000318"/>
    <property type="project" value="GO_Central"/>
</dbReference>
<dbReference type="CDD" id="cd16169">
    <property type="entry name" value="Tau138_eWH"/>
    <property type="match status" value="1"/>
</dbReference>
<dbReference type="InterPro" id="IPR046488">
    <property type="entry name" value="Sfc3/Tfc3_C"/>
</dbReference>
<dbReference type="InterPro" id="IPR044210">
    <property type="entry name" value="Tfc3-like"/>
</dbReference>
<dbReference type="InterPro" id="IPR035625">
    <property type="entry name" value="Tfc3-like_eWH"/>
</dbReference>
<dbReference type="InterPro" id="IPR049543">
    <property type="entry name" value="TFC3_eWH"/>
</dbReference>
<dbReference type="InterPro" id="IPR007309">
    <property type="entry name" value="TFIIIC_Bblock-bd"/>
</dbReference>
<dbReference type="PANTHER" id="PTHR15180">
    <property type="entry name" value="GENERAL TRANSCRIPTION FACTOR 3C POLYPEPTIDE 1"/>
    <property type="match status" value="1"/>
</dbReference>
<dbReference type="PANTHER" id="PTHR15180:SF1">
    <property type="entry name" value="GENERAL TRANSCRIPTION FACTOR 3C POLYPEPTIDE 1"/>
    <property type="match status" value="1"/>
</dbReference>
<dbReference type="Pfam" id="PF04182">
    <property type="entry name" value="B-block_TFIIIC"/>
    <property type="match status" value="1"/>
</dbReference>
<dbReference type="Pfam" id="PF20222">
    <property type="entry name" value="DUF6581"/>
    <property type="match status" value="1"/>
</dbReference>
<dbReference type="Pfam" id="PF21552">
    <property type="entry name" value="TFC3_eWH"/>
    <property type="match status" value="1"/>
</dbReference>
<proteinExistence type="evidence at protein level"/>